<organism>
    <name type="scientific">Clostridium perfringens (strain SM101 / Type A)</name>
    <dbReference type="NCBI Taxonomy" id="289380"/>
    <lineage>
        <taxon>Bacteria</taxon>
        <taxon>Bacillati</taxon>
        <taxon>Bacillota</taxon>
        <taxon>Clostridia</taxon>
        <taxon>Eubacteriales</taxon>
        <taxon>Clostridiaceae</taxon>
        <taxon>Clostridium</taxon>
    </lineage>
</organism>
<comment type="function">
    <text evidence="1">Produces ATP from ADP in the presence of a proton gradient across the membrane. The gamma chain is believed to be important in regulating ATPase activity and the flow of protons through the CF(0) complex.</text>
</comment>
<comment type="subunit">
    <text evidence="1">F-type ATPases have 2 components, CF(1) - the catalytic core - and CF(0) - the membrane proton channel. CF(1) has five subunits: alpha(3), beta(3), gamma(1), delta(1), epsilon(1). CF(0) has three main subunits: a, b and c.</text>
</comment>
<comment type="subcellular location">
    <subcellularLocation>
        <location evidence="1">Cell membrane</location>
        <topology evidence="1">Peripheral membrane protein</topology>
    </subcellularLocation>
</comment>
<comment type="similarity">
    <text evidence="1">Belongs to the ATPase gamma chain family.</text>
</comment>
<accession>Q0SQZ4</accession>
<keyword id="KW-0066">ATP synthesis</keyword>
<keyword id="KW-1003">Cell membrane</keyword>
<keyword id="KW-0139">CF(1)</keyword>
<keyword id="KW-0375">Hydrogen ion transport</keyword>
<keyword id="KW-0406">Ion transport</keyword>
<keyword id="KW-0472">Membrane</keyword>
<keyword id="KW-0813">Transport</keyword>
<protein>
    <recommendedName>
        <fullName evidence="1">ATP synthase gamma chain</fullName>
    </recommendedName>
    <alternativeName>
        <fullName evidence="1">ATP synthase F1 sector gamma subunit</fullName>
    </alternativeName>
    <alternativeName>
        <fullName evidence="1">F-ATPase gamma subunit</fullName>
    </alternativeName>
</protein>
<reference key="1">
    <citation type="journal article" date="2006" name="Genome Res.">
        <title>Skewed genomic variability in strains of the toxigenic bacterial pathogen, Clostridium perfringens.</title>
        <authorList>
            <person name="Myers G.S.A."/>
            <person name="Rasko D.A."/>
            <person name="Cheung J.K."/>
            <person name="Ravel J."/>
            <person name="Seshadri R."/>
            <person name="DeBoy R.T."/>
            <person name="Ren Q."/>
            <person name="Varga J."/>
            <person name="Awad M.M."/>
            <person name="Brinkac L.M."/>
            <person name="Daugherty S.C."/>
            <person name="Haft D.H."/>
            <person name="Dodson R.J."/>
            <person name="Madupu R."/>
            <person name="Nelson W.C."/>
            <person name="Rosovitz M.J."/>
            <person name="Sullivan S.A."/>
            <person name="Khouri H."/>
            <person name="Dimitrov G.I."/>
            <person name="Watkins K.L."/>
            <person name="Mulligan S."/>
            <person name="Benton J."/>
            <person name="Radune D."/>
            <person name="Fisher D.J."/>
            <person name="Atkins H.S."/>
            <person name="Hiscox T."/>
            <person name="Jost B.H."/>
            <person name="Billington S.J."/>
            <person name="Songer J.G."/>
            <person name="McClane B.A."/>
            <person name="Titball R.W."/>
            <person name="Rood J.I."/>
            <person name="Melville S.B."/>
            <person name="Paulsen I.T."/>
        </authorList>
    </citation>
    <scope>NUCLEOTIDE SEQUENCE [LARGE SCALE GENOMIC DNA]</scope>
    <source>
        <strain>SM101 / Type A</strain>
    </source>
</reference>
<dbReference type="EMBL" id="CP000312">
    <property type="protein sequence ID" value="ABG86976.1"/>
    <property type="molecule type" value="Genomic_DNA"/>
</dbReference>
<dbReference type="RefSeq" id="WP_003452288.1">
    <property type="nucleotide sequence ID" value="NZ_CAXVKH010000010.1"/>
</dbReference>
<dbReference type="SMR" id="Q0SQZ4"/>
<dbReference type="GeneID" id="93001269"/>
<dbReference type="KEGG" id="cpr:CPR_2163"/>
<dbReference type="Proteomes" id="UP000001824">
    <property type="component" value="Chromosome"/>
</dbReference>
<dbReference type="GO" id="GO:0005886">
    <property type="term" value="C:plasma membrane"/>
    <property type="evidence" value="ECO:0007669"/>
    <property type="project" value="UniProtKB-SubCell"/>
</dbReference>
<dbReference type="GO" id="GO:0045259">
    <property type="term" value="C:proton-transporting ATP synthase complex"/>
    <property type="evidence" value="ECO:0007669"/>
    <property type="project" value="UniProtKB-KW"/>
</dbReference>
<dbReference type="GO" id="GO:0005524">
    <property type="term" value="F:ATP binding"/>
    <property type="evidence" value="ECO:0007669"/>
    <property type="project" value="UniProtKB-UniRule"/>
</dbReference>
<dbReference type="GO" id="GO:0046933">
    <property type="term" value="F:proton-transporting ATP synthase activity, rotational mechanism"/>
    <property type="evidence" value="ECO:0007669"/>
    <property type="project" value="UniProtKB-UniRule"/>
</dbReference>
<dbReference type="GO" id="GO:0042777">
    <property type="term" value="P:proton motive force-driven plasma membrane ATP synthesis"/>
    <property type="evidence" value="ECO:0007669"/>
    <property type="project" value="UniProtKB-UniRule"/>
</dbReference>
<dbReference type="CDD" id="cd12151">
    <property type="entry name" value="F1-ATPase_gamma"/>
    <property type="match status" value="1"/>
</dbReference>
<dbReference type="Gene3D" id="3.40.1380.10">
    <property type="match status" value="1"/>
</dbReference>
<dbReference type="Gene3D" id="1.10.287.80">
    <property type="entry name" value="ATP synthase, gamma subunit, helix hairpin domain"/>
    <property type="match status" value="1"/>
</dbReference>
<dbReference type="HAMAP" id="MF_00815">
    <property type="entry name" value="ATP_synth_gamma_bact"/>
    <property type="match status" value="1"/>
</dbReference>
<dbReference type="InterPro" id="IPR035968">
    <property type="entry name" value="ATP_synth_F1_ATPase_gsu"/>
</dbReference>
<dbReference type="InterPro" id="IPR000131">
    <property type="entry name" value="ATP_synth_F1_gsu"/>
</dbReference>
<dbReference type="InterPro" id="IPR023632">
    <property type="entry name" value="ATP_synth_F1_gsu_CS"/>
</dbReference>
<dbReference type="NCBIfam" id="TIGR01146">
    <property type="entry name" value="ATPsyn_F1gamma"/>
    <property type="match status" value="1"/>
</dbReference>
<dbReference type="PANTHER" id="PTHR11693">
    <property type="entry name" value="ATP SYNTHASE GAMMA CHAIN"/>
    <property type="match status" value="1"/>
</dbReference>
<dbReference type="PANTHER" id="PTHR11693:SF22">
    <property type="entry name" value="ATP SYNTHASE SUBUNIT GAMMA, MITOCHONDRIAL"/>
    <property type="match status" value="1"/>
</dbReference>
<dbReference type="Pfam" id="PF00231">
    <property type="entry name" value="ATP-synt"/>
    <property type="match status" value="1"/>
</dbReference>
<dbReference type="PRINTS" id="PR00126">
    <property type="entry name" value="ATPASEGAMMA"/>
</dbReference>
<dbReference type="SUPFAM" id="SSF52943">
    <property type="entry name" value="ATP synthase (F1-ATPase), gamma subunit"/>
    <property type="match status" value="1"/>
</dbReference>
<dbReference type="PROSITE" id="PS00153">
    <property type="entry name" value="ATPASE_GAMMA"/>
    <property type="match status" value="1"/>
</dbReference>
<proteinExistence type="inferred from homology"/>
<feature type="chain" id="PRO_1000053196" description="ATP synthase gamma chain">
    <location>
        <begin position="1"/>
        <end position="283"/>
    </location>
</feature>
<evidence type="ECO:0000255" key="1">
    <source>
        <dbReference type="HAMAP-Rule" id="MF_00815"/>
    </source>
</evidence>
<gene>
    <name evidence="1" type="primary">atpG</name>
    <name type="ordered locus">CPR_2163</name>
</gene>
<sequence length="283" mass="31085">MAGAGLLEIKRRIKSIKNTRKITKAMGLVATSKLRKARQKLTENNQYFSSLDEIARELIGSLNSNNNPLLKPNDNPKKLIILLASDSGLCGGFNGNTAAFVRDNYENNLENIEAVVVGKKGIHYVKKNKISTLAEYVDLGDTPNVGDASTIVNKAVKEFTDGNFGEVSLVYTKFFSPVKQEVVEEKLLPLDLTGEKGKVSFLIEPDEDEIIDSLVSSYLKGKFMNAMFNSKASEQSARMQAMDGATKNADDLLNSLDAKYNRIRQSIITQEISEIVGGAEAQK</sequence>
<name>ATPG_CLOPS</name>